<reference key="1">
    <citation type="journal article" date="2008" name="Proc. Natl. Acad. Sci. U.S.A.">
        <title>Complete genome of the uncultured termite group 1 bacteria in a single host protist cell.</title>
        <authorList>
            <person name="Hongoh Y."/>
            <person name="Sharma V.K."/>
            <person name="Prakash T."/>
            <person name="Noda S."/>
            <person name="Taylor T.D."/>
            <person name="Kudo T."/>
            <person name="Sakaki Y."/>
            <person name="Toyoda A."/>
            <person name="Hattori M."/>
            <person name="Ohkuma M."/>
        </authorList>
    </citation>
    <scope>NUCLEOTIDE SEQUENCE [LARGE SCALE GENOMIC DNA]</scope>
</reference>
<gene>
    <name evidence="1" type="primary">bioD</name>
    <name type="ordered locus">TGRD_559</name>
</gene>
<name>BIOD_ENDTX</name>
<proteinExistence type="inferred from homology"/>
<sequence length="216" mass="24133">MYKGIFVTATDTEVGKTYVSCKIAETLEKSGINTGVFKPVSTGNRNDAKALIKAAKIDENTETVTPVFFKNPMSPYGASLLERRASDKIFDLKKINNAFKYFLNKYEFTVVEGVGGILVPLKQNFFVSDLIKKFNLPVIVVARFGLGTLNHTLLTVEKLKRDRQKILGVILSGKKNNNDVSVKSNALIIKKITNLSVLELGYNEKIDLEKNIWIIK</sequence>
<dbReference type="EC" id="6.3.3.3" evidence="1"/>
<dbReference type="EMBL" id="AP009510">
    <property type="protein sequence ID" value="BAG14042.1"/>
    <property type="molecule type" value="Genomic_DNA"/>
</dbReference>
<dbReference type="RefSeq" id="WP_015423567.1">
    <property type="nucleotide sequence ID" value="NC_020419.1"/>
</dbReference>
<dbReference type="SMR" id="B1H0L0"/>
<dbReference type="STRING" id="471821.TGRD_559"/>
<dbReference type="KEGG" id="rsd:TGRD_559"/>
<dbReference type="PATRIC" id="fig|471821.5.peg.905"/>
<dbReference type="HOGENOM" id="CLU_072551_3_1_0"/>
<dbReference type="UniPathway" id="UPA00078">
    <property type="reaction ID" value="UER00161"/>
</dbReference>
<dbReference type="Proteomes" id="UP000001691">
    <property type="component" value="Chromosome"/>
</dbReference>
<dbReference type="GO" id="GO:0005829">
    <property type="term" value="C:cytosol"/>
    <property type="evidence" value="ECO:0007669"/>
    <property type="project" value="TreeGrafter"/>
</dbReference>
<dbReference type="GO" id="GO:0005524">
    <property type="term" value="F:ATP binding"/>
    <property type="evidence" value="ECO:0007669"/>
    <property type="project" value="UniProtKB-UniRule"/>
</dbReference>
<dbReference type="GO" id="GO:0004141">
    <property type="term" value="F:dethiobiotin synthase activity"/>
    <property type="evidence" value="ECO:0007669"/>
    <property type="project" value="UniProtKB-UniRule"/>
</dbReference>
<dbReference type="GO" id="GO:0000287">
    <property type="term" value="F:magnesium ion binding"/>
    <property type="evidence" value="ECO:0007669"/>
    <property type="project" value="UniProtKB-UniRule"/>
</dbReference>
<dbReference type="GO" id="GO:0009102">
    <property type="term" value="P:biotin biosynthetic process"/>
    <property type="evidence" value="ECO:0007669"/>
    <property type="project" value="UniProtKB-UniRule"/>
</dbReference>
<dbReference type="CDD" id="cd03109">
    <property type="entry name" value="DTBS"/>
    <property type="match status" value="1"/>
</dbReference>
<dbReference type="Gene3D" id="3.40.50.300">
    <property type="entry name" value="P-loop containing nucleotide triphosphate hydrolases"/>
    <property type="match status" value="1"/>
</dbReference>
<dbReference type="HAMAP" id="MF_00336">
    <property type="entry name" value="BioD"/>
    <property type="match status" value="1"/>
</dbReference>
<dbReference type="InterPro" id="IPR004472">
    <property type="entry name" value="DTB_synth_BioD"/>
</dbReference>
<dbReference type="InterPro" id="IPR027417">
    <property type="entry name" value="P-loop_NTPase"/>
</dbReference>
<dbReference type="NCBIfam" id="TIGR00347">
    <property type="entry name" value="bioD"/>
    <property type="match status" value="1"/>
</dbReference>
<dbReference type="PANTHER" id="PTHR43210:SF2">
    <property type="entry name" value="ATP-DEPENDENT DETHIOBIOTIN SYNTHETASE BIOD 2"/>
    <property type="match status" value="1"/>
</dbReference>
<dbReference type="PANTHER" id="PTHR43210">
    <property type="entry name" value="DETHIOBIOTIN SYNTHETASE"/>
    <property type="match status" value="1"/>
</dbReference>
<dbReference type="Pfam" id="PF13500">
    <property type="entry name" value="AAA_26"/>
    <property type="match status" value="1"/>
</dbReference>
<dbReference type="PIRSF" id="PIRSF006755">
    <property type="entry name" value="DTB_synth"/>
    <property type="match status" value="1"/>
</dbReference>
<dbReference type="SUPFAM" id="SSF52540">
    <property type="entry name" value="P-loop containing nucleoside triphosphate hydrolases"/>
    <property type="match status" value="1"/>
</dbReference>
<protein>
    <recommendedName>
        <fullName evidence="1">ATP-dependent dethiobiotin synthetase BioD</fullName>
        <ecNumber evidence="1">6.3.3.3</ecNumber>
    </recommendedName>
    <alternativeName>
        <fullName evidence="1">DTB synthetase</fullName>
        <shortName evidence="1">DTBS</shortName>
    </alternativeName>
    <alternativeName>
        <fullName evidence="1">Dethiobiotin synthase</fullName>
    </alternativeName>
</protein>
<evidence type="ECO:0000255" key="1">
    <source>
        <dbReference type="HAMAP-Rule" id="MF_00336"/>
    </source>
</evidence>
<keyword id="KW-0067">ATP-binding</keyword>
<keyword id="KW-0093">Biotin biosynthesis</keyword>
<keyword id="KW-0963">Cytoplasm</keyword>
<keyword id="KW-0436">Ligase</keyword>
<keyword id="KW-0460">Magnesium</keyword>
<keyword id="KW-0479">Metal-binding</keyword>
<keyword id="KW-0547">Nucleotide-binding</keyword>
<organism>
    <name type="scientific">Endomicrobium trichonymphae</name>
    <dbReference type="NCBI Taxonomy" id="1408204"/>
    <lineage>
        <taxon>Bacteria</taxon>
        <taxon>Pseudomonadati</taxon>
        <taxon>Elusimicrobiota</taxon>
        <taxon>Endomicrobiia</taxon>
        <taxon>Endomicrobiales</taxon>
        <taxon>Endomicrobiaceae</taxon>
        <taxon>Candidatus Endomicrobiellum</taxon>
    </lineage>
</organism>
<feature type="chain" id="PRO_1000119885" description="ATP-dependent dethiobiotin synthetase BioD">
    <location>
        <begin position="1"/>
        <end position="216"/>
    </location>
</feature>
<feature type="active site" evidence="1">
    <location>
        <position position="38"/>
    </location>
</feature>
<feature type="binding site" evidence="1">
    <location>
        <begin position="13"/>
        <end position="18"/>
    </location>
    <ligand>
        <name>ATP</name>
        <dbReference type="ChEBI" id="CHEBI:30616"/>
    </ligand>
</feature>
<feature type="binding site" evidence="1">
    <location>
        <position position="17"/>
    </location>
    <ligand>
        <name>Mg(2+)</name>
        <dbReference type="ChEBI" id="CHEBI:18420"/>
    </ligand>
</feature>
<feature type="binding site" evidence="1">
    <location>
        <position position="42"/>
    </location>
    <ligand>
        <name>substrate</name>
    </ligand>
</feature>
<feature type="binding site" evidence="1">
    <location>
        <position position="47"/>
    </location>
    <ligand>
        <name>ATP</name>
        <dbReference type="ChEBI" id="CHEBI:30616"/>
    </ligand>
</feature>
<feature type="binding site" evidence="1">
    <location>
        <position position="47"/>
    </location>
    <ligand>
        <name>Mg(2+)</name>
        <dbReference type="ChEBI" id="CHEBI:18420"/>
    </ligand>
</feature>
<feature type="binding site" evidence="1">
    <location>
        <begin position="112"/>
        <end position="115"/>
    </location>
    <ligand>
        <name>ATP</name>
        <dbReference type="ChEBI" id="CHEBI:30616"/>
    </ligand>
</feature>
<feature type="binding site" evidence="1">
    <location>
        <position position="112"/>
    </location>
    <ligand>
        <name>Mg(2+)</name>
        <dbReference type="ChEBI" id="CHEBI:18420"/>
    </ligand>
</feature>
<accession>B1H0L0</accession>
<comment type="function">
    <text evidence="1">Catalyzes a mechanistically unusual reaction, the ATP-dependent insertion of CO2 between the N7 and N8 nitrogen atoms of 7,8-diaminopelargonic acid (DAPA, also called 7,8-diammoniononanoate) to form a ureido ring.</text>
</comment>
<comment type="catalytic activity">
    <reaction evidence="1">
        <text>(7R,8S)-7,8-diammoniononanoate + CO2 + ATP = (4R,5S)-dethiobiotin + ADP + phosphate + 3 H(+)</text>
        <dbReference type="Rhea" id="RHEA:15805"/>
        <dbReference type="ChEBI" id="CHEBI:15378"/>
        <dbReference type="ChEBI" id="CHEBI:16526"/>
        <dbReference type="ChEBI" id="CHEBI:30616"/>
        <dbReference type="ChEBI" id="CHEBI:43474"/>
        <dbReference type="ChEBI" id="CHEBI:149469"/>
        <dbReference type="ChEBI" id="CHEBI:149473"/>
        <dbReference type="ChEBI" id="CHEBI:456216"/>
        <dbReference type="EC" id="6.3.3.3"/>
    </reaction>
</comment>
<comment type="cofactor">
    <cofactor evidence="1">
        <name>Mg(2+)</name>
        <dbReference type="ChEBI" id="CHEBI:18420"/>
    </cofactor>
</comment>
<comment type="pathway">
    <text evidence="1">Cofactor biosynthesis; biotin biosynthesis; biotin from 7,8-diaminononanoate: step 1/2.</text>
</comment>
<comment type="subunit">
    <text evidence="1">Homodimer.</text>
</comment>
<comment type="subcellular location">
    <subcellularLocation>
        <location evidence="1">Cytoplasm</location>
    </subcellularLocation>
</comment>
<comment type="similarity">
    <text evidence="1">Belongs to the dethiobiotin synthetase family.</text>
</comment>